<feature type="chain" id="PRO_0000226900" description="ATP synthase subunit c, chloroplastic">
    <location>
        <begin position="1"/>
        <end position="81"/>
    </location>
</feature>
<feature type="transmembrane region" description="Helical" evidence="1">
    <location>
        <begin position="3"/>
        <end position="23"/>
    </location>
</feature>
<feature type="transmembrane region" description="Helical" evidence="1">
    <location>
        <begin position="57"/>
        <end position="77"/>
    </location>
</feature>
<feature type="site" description="Reversibly protonated during proton transport" evidence="1">
    <location>
        <position position="61"/>
    </location>
</feature>
<keyword id="KW-0066">ATP synthesis</keyword>
<keyword id="KW-0138">CF(0)</keyword>
<keyword id="KW-0150">Chloroplast</keyword>
<keyword id="KW-0375">Hydrogen ion transport</keyword>
<keyword id="KW-0406">Ion transport</keyword>
<keyword id="KW-0446">Lipid-binding</keyword>
<keyword id="KW-0472">Membrane</keyword>
<keyword id="KW-0934">Plastid</keyword>
<keyword id="KW-0793">Thylakoid</keyword>
<keyword id="KW-0812">Transmembrane</keyword>
<keyword id="KW-1133">Transmembrane helix</keyword>
<keyword id="KW-0813">Transport</keyword>
<protein>
    <recommendedName>
        <fullName evidence="1">ATP synthase subunit c, chloroplastic</fullName>
    </recommendedName>
    <alternativeName>
        <fullName evidence="1">ATP synthase F(0) sector subunit c</fullName>
    </alternativeName>
    <alternativeName>
        <fullName evidence="1">ATPase subunit III</fullName>
    </alternativeName>
    <alternativeName>
        <fullName evidence="1">F-type ATPase subunit c</fullName>
        <shortName evidence="1">F-ATPase subunit c</shortName>
    </alternativeName>
    <alternativeName>
        <fullName evidence="1">Lipid-binding protein</fullName>
    </alternativeName>
</protein>
<sequence>MNPLIAAASVIAAGLAVGLASIGPGVGQGTAAGQAVEGIARQPEAEGKIRGTLLLSLAFMEALTIYGLVVALALLFANPFV</sequence>
<reference key="1">
    <citation type="journal article" date="2004" name="Curr. Genet.">
        <title>Structural features and transcript-editing analysis of sugarcane (Saccharum officinarum L.) chloroplast genome.</title>
        <authorList>
            <person name="Calsa T. Jr."/>
            <person name="Carraro D.M."/>
            <person name="Benatti M.R."/>
            <person name="Barbosa A.C."/>
            <person name="Kitajima J.P."/>
            <person name="Carrer H."/>
        </authorList>
    </citation>
    <scope>NUCLEOTIDE SEQUENCE [LARGE SCALE GENOMIC DNA]</scope>
    <source>
        <strain>cv. SP-80-3280</strain>
    </source>
</reference>
<organism>
    <name type="scientific">Saccharum hybrid</name>
    <name type="common">Sugarcane</name>
    <dbReference type="NCBI Taxonomy" id="15819"/>
    <lineage>
        <taxon>Eukaryota</taxon>
        <taxon>Viridiplantae</taxon>
        <taxon>Streptophyta</taxon>
        <taxon>Embryophyta</taxon>
        <taxon>Tracheophyta</taxon>
        <taxon>Spermatophyta</taxon>
        <taxon>Magnoliopsida</taxon>
        <taxon>Liliopsida</taxon>
        <taxon>Poales</taxon>
        <taxon>Poaceae</taxon>
        <taxon>PACMAD clade</taxon>
        <taxon>Panicoideae</taxon>
        <taxon>Andropogonodae</taxon>
        <taxon>Andropogoneae</taxon>
        <taxon>Saccharinae</taxon>
        <taxon>Saccharum</taxon>
    </lineage>
</organism>
<accession>Q6L3A2</accession>
<gene>
    <name evidence="1" type="primary">atpH</name>
    <name type="ordered locus">PS111</name>
</gene>
<geneLocation type="chloroplast"/>
<dbReference type="EMBL" id="AE009947">
    <property type="protein sequence ID" value="AAT44690.1"/>
    <property type="molecule type" value="Genomic_DNA"/>
</dbReference>
<dbReference type="SMR" id="Q6L3A2"/>
<dbReference type="GO" id="GO:0009535">
    <property type="term" value="C:chloroplast thylakoid membrane"/>
    <property type="evidence" value="ECO:0007669"/>
    <property type="project" value="UniProtKB-SubCell"/>
</dbReference>
<dbReference type="GO" id="GO:0045259">
    <property type="term" value="C:proton-transporting ATP synthase complex"/>
    <property type="evidence" value="ECO:0007669"/>
    <property type="project" value="UniProtKB-KW"/>
</dbReference>
<dbReference type="GO" id="GO:0033177">
    <property type="term" value="C:proton-transporting two-sector ATPase complex, proton-transporting domain"/>
    <property type="evidence" value="ECO:0007669"/>
    <property type="project" value="InterPro"/>
</dbReference>
<dbReference type="GO" id="GO:0008289">
    <property type="term" value="F:lipid binding"/>
    <property type="evidence" value="ECO:0007669"/>
    <property type="project" value="UniProtKB-KW"/>
</dbReference>
<dbReference type="GO" id="GO:0046933">
    <property type="term" value="F:proton-transporting ATP synthase activity, rotational mechanism"/>
    <property type="evidence" value="ECO:0007669"/>
    <property type="project" value="UniProtKB-UniRule"/>
</dbReference>
<dbReference type="CDD" id="cd18183">
    <property type="entry name" value="ATP-synt_Fo_c_ATPH"/>
    <property type="match status" value="1"/>
</dbReference>
<dbReference type="FunFam" id="1.20.20.10:FF:000001">
    <property type="entry name" value="ATP synthase subunit c, chloroplastic"/>
    <property type="match status" value="1"/>
</dbReference>
<dbReference type="Gene3D" id="1.20.20.10">
    <property type="entry name" value="F1F0 ATP synthase subunit C"/>
    <property type="match status" value="1"/>
</dbReference>
<dbReference type="HAMAP" id="MF_01396">
    <property type="entry name" value="ATP_synth_c_bact"/>
    <property type="match status" value="1"/>
</dbReference>
<dbReference type="InterPro" id="IPR005953">
    <property type="entry name" value="ATP_synth_csu_bac/chlpt"/>
</dbReference>
<dbReference type="InterPro" id="IPR000454">
    <property type="entry name" value="ATP_synth_F0_csu"/>
</dbReference>
<dbReference type="InterPro" id="IPR020537">
    <property type="entry name" value="ATP_synth_F0_csu_DDCD_BS"/>
</dbReference>
<dbReference type="InterPro" id="IPR038662">
    <property type="entry name" value="ATP_synth_F0_csu_sf"/>
</dbReference>
<dbReference type="InterPro" id="IPR002379">
    <property type="entry name" value="ATPase_proteolipid_c-like_dom"/>
</dbReference>
<dbReference type="InterPro" id="IPR035921">
    <property type="entry name" value="F/V-ATP_Csub_sf"/>
</dbReference>
<dbReference type="NCBIfam" id="TIGR01260">
    <property type="entry name" value="ATP_synt_c"/>
    <property type="match status" value="1"/>
</dbReference>
<dbReference type="NCBIfam" id="NF005608">
    <property type="entry name" value="PRK07354.1"/>
    <property type="match status" value="1"/>
</dbReference>
<dbReference type="PANTHER" id="PTHR10031">
    <property type="entry name" value="ATP SYNTHASE LIPID-BINDING PROTEIN, MITOCHONDRIAL"/>
    <property type="match status" value="1"/>
</dbReference>
<dbReference type="PANTHER" id="PTHR10031:SF0">
    <property type="entry name" value="ATPASE PROTEIN 9"/>
    <property type="match status" value="1"/>
</dbReference>
<dbReference type="Pfam" id="PF00137">
    <property type="entry name" value="ATP-synt_C"/>
    <property type="match status" value="1"/>
</dbReference>
<dbReference type="PRINTS" id="PR00124">
    <property type="entry name" value="ATPASEC"/>
</dbReference>
<dbReference type="SUPFAM" id="SSF81333">
    <property type="entry name" value="F1F0 ATP synthase subunit C"/>
    <property type="match status" value="1"/>
</dbReference>
<dbReference type="PROSITE" id="PS00605">
    <property type="entry name" value="ATPASE_C"/>
    <property type="match status" value="1"/>
</dbReference>
<name>ATPH_SACHY</name>
<proteinExistence type="inferred from homology"/>
<evidence type="ECO:0000255" key="1">
    <source>
        <dbReference type="HAMAP-Rule" id="MF_01396"/>
    </source>
</evidence>
<comment type="function">
    <text evidence="1">F(1)F(0) ATP synthase produces ATP from ADP in the presence of a proton or sodium gradient. F-type ATPases consist of two structural domains, F(1) containing the extramembraneous catalytic core and F(0) containing the membrane proton channel, linked together by a central stalk and a peripheral stalk. During catalysis, ATP synthesis in the catalytic domain of F(1) is coupled via a rotary mechanism of the central stalk subunits to proton translocation.</text>
</comment>
<comment type="function">
    <text evidence="1">Key component of the F(0) channel; it plays a direct role in translocation across the membrane. A homomeric c-ring of between 10-14 subunits forms the central stalk rotor element with the F(1) delta and epsilon subunits.</text>
</comment>
<comment type="subunit">
    <text evidence="1">F-type ATPases have 2 components, F(1) - the catalytic core - and F(0) - the membrane proton channel. F(1) has five subunits: alpha(3), beta(3), gamma(1), delta(1), epsilon(1). F(0) has four main subunits: a(1), b(1), b'(1) and c(10-14). The alpha and beta chains form an alternating ring which encloses part of the gamma chain. F(1) is attached to F(0) by a central stalk formed by the gamma and epsilon chains, while a peripheral stalk is formed by the delta, b and b' chains.</text>
</comment>
<comment type="subcellular location">
    <subcellularLocation>
        <location evidence="1">Plastid</location>
        <location evidence="1">Chloroplast thylakoid membrane</location>
        <topology evidence="1">Multi-pass membrane protein</topology>
    </subcellularLocation>
</comment>
<comment type="miscellaneous">
    <text>In plastids the F-type ATPase is also known as CF(1)CF(0).</text>
</comment>
<comment type="miscellaneous">
    <text>Dicyclohexylcarbodiimide (DCDD) inhibits ATPase.</text>
</comment>
<comment type="similarity">
    <text evidence="1">Belongs to the ATPase C chain family.</text>
</comment>